<accession>Q96B49</accession>
<accession>B2DG15</accession>
<accession>Q9UH52</accession>
<comment type="subunit">
    <text evidence="2">Forms part of the preprotein translocase complex of the outer mitochondrial membrane (TOM complex) which consists of at least 7 different proteins (TOMM5, TOMM6, TOMM7, TOMM20, TOMM22, TOMM40 and TOMM70).</text>
</comment>
<comment type="interaction">
    <interactant intactId="EBI-10826510">
        <id>Q96B49</id>
    </interactant>
    <interactant intactId="EBI-13059134">
        <id>Q13520</id>
        <label>AQP6</label>
    </interactant>
    <organismsDiffer>false</organismsDiffer>
    <experiments>3</experiments>
</comment>
<comment type="interaction">
    <interactant intactId="EBI-10826510">
        <id>Q96B49</id>
    </interactant>
    <interactant intactId="EBI-17586094">
        <id>Q96HA4-2</id>
        <label>C1orf159</label>
    </interactant>
    <organismsDiffer>false</organismsDiffer>
    <experiments>3</experiments>
</comment>
<comment type="interaction">
    <interactant intactId="EBI-10826510">
        <id>Q96B49</id>
    </interactant>
    <interactant intactId="EBI-2826276">
        <id>P34810</id>
        <label>CD68</label>
    </interactant>
    <organismsDiffer>false</organismsDiffer>
    <experiments>6</experiments>
</comment>
<comment type="interaction">
    <interactant intactId="EBI-10826510">
        <id>Q96B49</id>
    </interactant>
    <interactant intactId="EBI-2622997">
        <id>Q9HA82</id>
        <label>CERS4</label>
    </interactant>
    <organismsDiffer>false</organismsDiffer>
    <experiments>3</experiments>
</comment>
<comment type="interaction">
    <interactant intactId="EBI-10826510">
        <id>Q96B49</id>
    </interactant>
    <interactant intactId="EBI-781551">
        <id>Q9Y282</id>
        <label>ERGIC3</label>
    </interactant>
    <organismsDiffer>false</organismsDiffer>
    <experiments>3</experiments>
</comment>
<comment type="interaction">
    <interactant intactId="EBI-10826510">
        <id>Q96B49</id>
    </interactant>
    <interactant intactId="EBI-17762181">
        <id>O14843</id>
        <label>FFAR3</label>
    </interactant>
    <organismsDiffer>false</organismsDiffer>
    <experiments>3</experiments>
</comment>
<comment type="interaction">
    <interactant intactId="EBI-10826510">
        <id>Q96B49</id>
    </interactant>
    <interactant intactId="EBI-12382569">
        <id>Q2M2E3</id>
        <label>ODF4</label>
    </interactant>
    <organismsDiffer>false</organismsDiffer>
    <experiments>3</experiments>
</comment>
<comment type="interaction">
    <interactant intactId="EBI-10826510">
        <id>Q96B49</id>
    </interactant>
    <interactant intactId="EBI-12238317">
        <id>Q8TC24</id>
        <label>SEC61A2</label>
    </interactant>
    <organismsDiffer>false</organismsDiffer>
    <experiments>3</experiments>
</comment>
<comment type="interaction">
    <interactant intactId="EBI-10826510">
        <id>Q96B49</id>
    </interactant>
    <interactant intactId="EBI-3923031">
        <id>Q14973</id>
        <label>SLC10A1</label>
    </interactant>
    <organismsDiffer>false</organismsDiffer>
    <experiments>3</experiments>
</comment>
<comment type="interaction">
    <interactant intactId="EBI-10826510">
        <id>Q96B49</id>
    </interactant>
    <interactant intactId="EBI-18036244">
        <id>Q05940</id>
        <label>SLC18A2</label>
    </interactant>
    <organismsDiffer>false</organismsDiffer>
    <experiments>3</experiments>
</comment>
<comment type="interaction">
    <interactant intactId="EBI-10826510">
        <id>Q96B49</id>
    </interactant>
    <interactant intactId="EBI-8638294">
        <id>Q9NUH8</id>
        <label>TMEM14B</label>
    </interactant>
    <organismsDiffer>false</organismsDiffer>
    <experiments>3</experiments>
</comment>
<comment type="subcellular location">
    <subcellularLocation>
        <location evidence="2">Mitochondrion outer membrane</location>
    </subcellularLocation>
</comment>
<comment type="similarity">
    <text evidence="3">Belongs to the Tom6 family.</text>
</comment>
<gene>
    <name type="primary">TOMM6</name>
    <name type="synonym">OBTP</name>
    <name type="synonym">TOM6</name>
</gene>
<feature type="initiator methionine" description="Removed" evidence="4">
    <location>
        <position position="1"/>
    </location>
</feature>
<feature type="chain" id="PRO_0000302856" description="Mitochondrial import receptor subunit TOM6 homolog">
    <location>
        <begin position="2"/>
        <end position="74"/>
    </location>
</feature>
<feature type="region of interest" description="Disordered" evidence="1">
    <location>
        <begin position="1"/>
        <end position="22"/>
    </location>
</feature>
<feature type="compositionally biased region" description="Polar residues" evidence="1">
    <location>
        <begin position="1"/>
        <end position="16"/>
    </location>
</feature>
<feature type="modified residue" description="N-acetylalanine" evidence="4">
    <location>
        <position position="2"/>
    </location>
</feature>
<feature type="sequence conflict" description="In Ref. 2; AAF25683." evidence="3" ref="2">
    <original>E</original>
    <variation>K</variation>
    <location>
        <position position="16"/>
    </location>
</feature>
<feature type="turn" evidence="5">
    <location>
        <begin position="17"/>
        <end position="19"/>
    </location>
</feature>
<feature type="helix" evidence="6">
    <location>
        <begin position="27"/>
        <end position="36"/>
    </location>
</feature>
<feature type="helix" evidence="6">
    <location>
        <begin position="41"/>
        <end position="59"/>
    </location>
</feature>
<protein>
    <recommendedName>
        <fullName>Mitochondrial import receptor subunit TOM6 homolog</fullName>
    </recommendedName>
    <alternativeName>
        <fullName>Overexpressed breast tumor protein</fullName>
    </alternativeName>
    <alternativeName>
        <fullName>Translocase of outer membrane 6 kDa subunit homolog</fullName>
    </alternativeName>
</protein>
<organism>
    <name type="scientific">Homo sapiens</name>
    <name type="common">Human</name>
    <dbReference type="NCBI Taxonomy" id="9606"/>
    <lineage>
        <taxon>Eukaryota</taxon>
        <taxon>Metazoa</taxon>
        <taxon>Chordata</taxon>
        <taxon>Craniata</taxon>
        <taxon>Vertebrata</taxon>
        <taxon>Euteleostomi</taxon>
        <taxon>Mammalia</taxon>
        <taxon>Eutheria</taxon>
        <taxon>Euarchontoglires</taxon>
        <taxon>Primates</taxon>
        <taxon>Haplorrhini</taxon>
        <taxon>Catarrhini</taxon>
        <taxon>Hominidae</taxon>
        <taxon>Homo</taxon>
    </lineage>
</organism>
<proteinExistence type="evidence at protein level"/>
<keyword id="KW-0002">3D-structure</keyword>
<keyword id="KW-0007">Acetylation</keyword>
<keyword id="KW-0472">Membrane</keyword>
<keyword id="KW-0496">Mitochondrion</keyword>
<keyword id="KW-1000">Mitochondrion outer membrane</keyword>
<keyword id="KW-0653">Protein transport</keyword>
<keyword id="KW-1267">Proteomics identification</keyword>
<keyword id="KW-1185">Reference proteome</keyword>
<keyword id="KW-0813">Transport</keyword>
<dbReference type="EMBL" id="AB435319">
    <property type="protein sequence ID" value="BAG30996.1"/>
    <property type="molecule type" value="mRNA"/>
</dbReference>
<dbReference type="EMBL" id="AF216754">
    <property type="protein sequence ID" value="AAF25683.1"/>
    <property type="molecule type" value="mRNA"/>
</dbReference>
<dbReference type="EMBL" id="AL365205">
    <property type="status" value="NOT_ANNOTATED_CDS"/>
    <property type="molecule type" value="Genomic_DNA"/>
</dbReference>
<dbReference type="EMBL" id="BC015975">
    <property type="protein sequence ID" value="AAH15975.1"/>
    <property type="molecule type" value="mRNA"/>
</dbReference>
<dbReference type="EMBL" id="BC018624">
    <property type="protein sequence ID" value="AAH18624.1"/>
    <property type="molecule type" value="mRNA"/>
</dbReference>
<dbReference type="EMBL" id="BC022274">
    <property type="protein sequence ID" value="AAH22274.1"/>
    <property type="molecule type" value="mRNA"/>
</dbReference>
<dbReference type="CCDS" id="CCDS47424.1"/>
<dbReference type="RefSeq" id="NP_001127965.1">
    <property type="nucleotide sequence ID" value="NM_001134493.2"/>
</dbReference>
<dbReference type="RefSeq" id="NP_001369223.1">
    <property type="nucleotide sequence ID" value="NM_001382294.1"/>
</dbReference>
<dbReference type="PDB" id="7CK6">
    <property type="method" value="EM"/>
    <property type="resolution" value="3.40 A"/>
    <property type="chains" value="E/F=1-74"/>
</dbReference>
<dbReference type="PDB" id="7CP9">
    <property type="method" value="EM"/>
    <property type="resolution" value="3.00 A"/>
    <property type="chains" value="C/D=1-74"/>
</dbReference>
<dbReference type="PDB" id="7VBY">
    <property type="method" value="EM"/>
    <property type="resolution" value="2.54 A"/>
    <property type="chains" value="A/F=1-74"/>
</dbReference>
<dbReference type="PDB" id="7VC4">
    <property type="method" value="EM"/>
    <property type="resolution" value="3.74 A"/>
    <property type="chains" value="A/F=1-74"/>
</dbReference>
<dbReference type="PDB" id="7VD2">
    <property type="method" value="EM"/>
    <property type="resolution" value="2.53 A"/>
    <property type="chains" value="A/F=1-74"/>
</dbReference>
<dbReference type="PDB" id="7VDD">
    <property type="method" value="EM"/>
    <property type="resolution" value="3.74 A"/>
    <property type="chains" value="A/F=1-74"/>
</dbReference>
<dbReference type="PDB" id="8XVA">
    <property type="method" value="EM"/>
    <property type="resolution" value="5.92 A"/>
    <property type="chains" value="A/F=1-74"/>
</dbReference>
<dbReference type="PDB" id="9EIH">
    <property type="method" value="EM"/>
    <property type="resolution" value="3.10 A"/>
    <property type="chains" value="O/P/U/V=1-74"/>
</dbReference>
<dbReference type="PDB" id="9EII">
    <property type="method" value="EM"/>
    <property type="resolution" value="2.75 A"/>
    <property type="chains" value="P/V=1-74"/>
</dbReference>
<dbReference type="PDB" id="9EIJ">
    <property type="method" value="EM"/>
    <property type="resolution" value="3.30 A"/>
    <property type="chains" value="P/V=1-74"/>
</dbReference>
<dbReference type="PDBsum" id="7CK6"/>
<dbReference type="PDBsum" id="7CP9"/>
<dbReference type="PDBsum" id="7VBY"/>
<dbReference type="PDBsum" id="7VC4"/>
<dbReference type="PDBsum" id="7VD2"/>
<dbReference type="PDBsum" id="7VDD"/>
<dbReference type="PDBsum" id="8XVA"/>
<dbReference type="PDBsum" id="9EIH"/>
<dbReference type="PDBsum" id="9EII"/>
<dbReference type="PDBsum" id="9EIJ"/>
<dbReference type="EMDB" id="EMD-30382"/>
<dbReference type="EMDB" id="EMD-30421"/>
<dbReference type="EMDB" id="EMD-31885"/>
<dbReference type="EMDB" id="EMD-31888"/>
<dbReference type="EMDB" id="EMD-31904"/>
<dbReference type="EMDB" id="EMD-31914"/>
<dbReference type="EMDB" id="EMD-38694"/>
<dbReference type="EMDB" id="EMD-48083"/>
<dbReference type="EMDB" id="EMD-48084"/>
<dbReference type="EMDB" id="EMD-48085"/>
<dbReference type="SMR" id="Q96B49"/>
<dbReference type="BioGRID" id="937002">
    <property type="interactions" value="40"/>
</dbReference>
<dbReference type="ComplexPortal" id="CPX-6121">
    <property type="entry name" value="TOM40 mitochondrial outer membrane translocase complex"/>
</dbReference>
<dbReference type="CORUM" id="Q96B49"/>
<dbReference type="FunCoup" id="Q96B49">
    <property type="interactions" value="317"/>
</dbReference>
<dbReference type="IntAct" id="Q96B49">
    <property type="interactions" value="23"/>
</dbReference>
<dbReference type="MINT" id="Q96B49"/>
<dbReference type="STRING" id="9606.ENSP00000381859"/>
<dbReference type="GlyGen" id="Q96B49">
    <property type="glycosylation" value="4 sites, 1 N-linked glycan (1 site), 1 O-linked glycan (3 sites)"/>
</dbReference>
<dbReference type="iPTMnet" id="Q96B49"/>
<dbReference type="PhosphoSitePlus" id="Q96B49"/>
<dbReference type="BioMuta" id="TOMM6"/>
<dbReference type="jPOST" id="Q96B49"/>
<dbReference type="MassIVE" id="Q96B49"/>
<dbReference type="PaxDb" id="9606-ENSP00000381859"/>
<dbReference type="PeptideAtlas" id="Q96B49"/>
<dbReference type="ProteomicsDB" id="76045"/>
<dbReference type="Pumba" id="Q96B49"/>
<dbReference type="TopDownProteomics" id="Q96B49"/>
<dbReference type="Antibodypedia" id="1581">
    <property type="antibodies" value="84 antibodies from 19 providers"/>
</dbReference>
<dbReference type="DNASU" id="100188893"/>
<dbReference type="Ensembl" id="ENST00000398881.4">
    <property type="protein sequence ID" value="ENSP00000381856.3"/>
    <property type="gene ID" value="ENSG00000214736.8"/>
</dbReference>
<dbReference type="Ensembl" id="ENST00000398884.7">
    <property type="protein sequence ID" value="ENSP00000381859.3"/>
    <property type="gene ID" value="ENSG00000214736.8"/>
</dbReference>
<dbReference type="GeneID" id="100188893"/>
<dbReference type="KEGG" id="hsa:100188893"/>
<dbReference type="MANE-Select" id="ENST00000398881.4">
    <property type="protein sequence ID" value="ENSP00000381856.3"/>
    <property type="RefSeq nucleotide sequence ID" value="NM_001382294.1"/>
    <property type="RefSeq protein sequence ID" value="NP_001369223.1"/>
</dbReference>
<dbReference type="UCSC" id="uc011dug.2">
    <property type="organism name" value="human"/>
</dbReference>
<dbReference type="AGR" id="HGNC:34528"/>
<dbReference type="CTD" id="100188893"/>
<dbReference type="GeneCards" id="TOMM6"/>
<dbReference type="HGNC" id="HGNC:34528">
    <property type="gene designation" value="TOMM6"/>
</dbReference>
<dbReference type="HPA" id="ENSG00000214736">
    <property type="expression patterns" value="Low tissue specificity"/>
</dbReference>
<dbReference type="MIM" id="616168">
    <property type="type" value="gene"/>
</dbReference>
<dbReference type="neXtProt" id="NX_Q96B49"/>
<dbReference type="PharmGKB" id="PA164726679"/>
<dbReference type="VEuPathDB" id="HostDB:ENSG00000214736"/>
<dbReference type="eggNOG" id="ENOG502S9AX">
    <property type="taxonomic scope" value="Eukaryota"/>
</dbReference>
<dbReference type="GeneTree" id="ENSGT00390000002376"/>
<dbReference type="HOGENOM" id="CLU_2687147_0_0_1"/>
<dbReference type="InParanoid" id="Q96B49"/>
<dbReference type="OMA" id="WIRGAYR"/>
<dbReference type="OrthoDB" id="6016677at2759"/>
<dbReference type="PAN-GO" id="Q96B49">
    <property type="GO annotations" value="1 GO annotation based on evolutionary models"/>
</dbReference>
<dbReference type="PhylomeDB" id="Q96B49"/>
<dbReference type="TreeFam" id="TF330716"/>
<dbReference type="PathwayCommons" id="Q96B49"/>
<dbReference type="Reactome" id="R-HSA-1268020">
    <property type="pathway name" value="Mitochondrial protein import"/>
</dbReference>
<dbReference type="Reactome" id="R-HSA-5205685">
    <property type="pathway name" value="PINK1-PRKN Mediated Mitophagy"/>
</dbReference>
<dbReference type="SignaLink" id="Q96B49"/>
<dbReference type="SIGNOR" id="Q96B49"/>
<dbReference type="BioGRID-ORCS" id="100188893">
    <property type="hits" value="14 hits in 1117 CRISPR screens"/>
</dbReference>
<dbReference type="ChiTaRS" id="TOMM6">
    <property type="organism name" value="human"/>
</dbReference>
<dbReference type="GenomeRNAi" id="100188893"/>
<dbReference type="Pharos" id="Q96B49">
    <property type="development level" value="Tbio"/>
</dbReference>
<dbReference type="PRO" id="PR:Q96B49"/>
<dbReference type="Proteomes" id="UP000005640">
    <property type="component" value="Chromosome 6"/>
</dbReference>
<dbReference type="RNAct" id="Q96B49">
    <property type="molecule type" value="protein"/>
</dbReference>
<dbReference type="Bgee" id="ENSG00000214736">
    <property type="expression patterns" value="Expressed in right adrenal gland and 98 other cell types or tissues"/>
</dbReference>
<dbReference type="GO" id="GO:0005741">
    <property type="term" value="C:mitochondrial outer membrane"/>
    <property type="evidence" value="ECO:0000304"/>
    <property type="project" value="Reactome"/>
</dbReference>
<dbReference type="GO" id="GO:0005739">
    <property type="term" value="C:mitochondrion"/>
    <property type="evidence" value="ECO:0000314"/>
    <property type="project" value="HPA"/>
</dbReference>
<dbReference type="GO" id="GO:0140596">
    <property type="term" value="C:TOM complex"/>
    <property type="evidence" value="ECO:0000303"/>
    <property type="project" value="ComplexPortal"/>
</dbReference>
<dbReference type="GO" id="GO:0045040">
    <property type="term" value="P:protein insertion into mitochondrial outer membrane"/>
    <property type="evidence" value="ECO:0000303"/>
    <property type="project" value="ComplexPortal"/>
</dbReference>
<dbReference type="InterPro" id="IPR029182">
    <property type="entry name" value="TOMM6"/>
</dbReference>
<dbReference type="PANTHER" id="PTHR15527">
    <property type="entry name" value="MITOCHONDRIAL IMPORT RECEPTOR SUBUNIT TOM6 HOMOLOG"/>
    <property type="match status" value="1"/>
</dbReference>
<dbReference type="PANTHER" id="PTHR15527:SF0">
    <property type="entry name" value="MITOCHONDRIAL IMPORT RECEPTOR SUBUNIT TOM6 HOMOLOG"/>
    <property type="match status" value="1"/>
</dbReference>
<dbReference type="Pfam" id="PF15184">
    <property type="entry name" value="TOM6p"/>
    <property type="match status" value="1"/>
</dbReference>
<evidence type="ECO:0000256" key="1">
    <source>
        <dbReference type="SAM" id="MobiDB-lite"/>
    </source>
</evidence>
<evidence type="ECO:0000269" key="2">
    <source>
    </source>
</evidence>
<evidence type="ECO:0000305" key="3"/>
<evidence type="ECO:0007744" key="4">
    <source>
    </source>
</evidence>
<evidence type="ECO:0007829" key="5">
    <source>
        <dbReference type="PDB" id="7CP9"/>
    </source>
</evidence>
<evidence type="ECO:0007829" key="6">
    <source>
        <dbReference type="PDB" id="7VD2"/>
    </source>
</evidence>
<name>TOM6_HUMAN</name>
<reference key="1">
    <citation type="journal article" date="2008" name="Biochem. Biophys. Res. Commun.">
        <title>Identification of Tom5 and Tom6 in the preprotein translocase complex of human mitochondrial outer membrane.</title>
        <authorList>
            <person name="Kato H."/>
            <person name="Mihara K."/>
        </authorList>
    </citation>
    <scope>NUCLEOTIDE SEQUENCE [MRNA]</scope>
    <scope>IDENTIFICATION IN THE TOM COMPLEX</scope>
    <scope>SUBCELLULAR LOCATION</scope>
</reference>
<reference key="2">
    <citation type="submission" date="1999-12" db="EMBL/GenBank/DDBJ databases">
        <title>Identification of a novel human over-expressed breast tumor protein in hepatocellular carcinoma.</title>
        <authorList>
            <person name="Kok L.D."/>
            <person name="Au T.C."/>
            <person name="Fung K.P."/>
            <person name="Lee C.Y."/>
            <person name="Tsui S.K."/>
            <person name="Waye M.M."/>
        </authorList>
    </citation>
    <scope>NUCLEOTIDE SEQUENCE [MRNA]</scope>
    <source>
        <tissue>Liver cancer</tissue>
    </source>
</reference>
<reference key="3">
    <citation type="journal article" date="2003" name="Nature">
        <title>The DNA sequence and analysis of human chromosome 6.</title>
        <authorList>
            <person name="Mungall A.J."/>
            <person name="Palmer S.A."/>
            <person name="Sims S.K."/>
            <person name="Edwards C.A."/>
            <person name="Ashurst J.L."/>
            <person name="Wilming L."/>
            <person name="Jones M.C."/>
            <person name="Horton R."/>
            <person name="Hunt S.E."/>
            <person name="Scott C.E."/>
            <person name="Gilbert J.G.R."/>
            <person name="Clamp M.E."/>
            <person name="Bethel G."/>
            <person name="Milne S."/>
            <person name="Ainscough R."/>
            <person name="Almeida J.P."/>
            <person name="Ambrose K.D."/>
            <person name="Andrews T.D."/>
            <person name="Ashwell R.I.S."/>
            <person name="Babbage A.K."/>
            <person name="Bagguley C.L."/>
            <person name="Bailey J."/>
            <person name="Banerjee R."/>
            <person name="Barker D.J."/>
            <person name="Barlow K.F."/>
            <person name="Bates K."/>
            <person name="Beare D.M."/>
            <person name="Beasley H."/>
            <person name="Beasley O."/>
            <person name="Bird C.P."/>
            <person name="Blakey S.E."/>
            <person name="Bray-Allen S."/>
            <person name="Brook J."/>
            <person name="Brown A.J."/>
            <person name="Brown J.Y."/>
            <person name="Burford D.C."/>
            <person name="Burrill W."/>
            <person name="Burton J."/>
            <person name="Carder C."/>
            <person name="Carter N.P."/>
            <person name="Chapman J.C."/>
            <person name="Clark S.Y."/>
            <person name="Clark G."/>
            <person name="Clee C.M."/>
            <person name="Clegg S."/>
            <person name="Cobley V."/>
            <person name="Collier R.E."/>
            <person name="Collins J.E."/>
            <person name="Colman L.K."/>
            <person name="Corby N.R."/>
            <person name="Coville G.J."/>
            <person name="Culley K.M."/>
            <person name="Dhami P."/>
            <person name="Davies J."/>
            <person name="Dunn M."/>
            <person name="Earthrowl M.E."/>
            <person name="Ellington A.E."/>
            <person name="Evans K.A."/>
            <person name="Faulkner L."/>
            <person name="Francis M.D."/>
            <person name="Frankish A."/>
            <person name="Frankland J."/>
            <person name="French L."/>
            <person name="Garner P."/>
            <person name="Garnett J."/>
            <person name="Ghori M.J."/>
            <person name="Gilby L.M."/>
            <person name="Gillson C.J."/>
            <person name="Glithero R.J."/>
            <person name="Grafham D.V."/>
            <person name="Grant M."/>
            <person name="Gribble S."/>
            <person name="Griffiths C."/>
            <person name="Griffiths M.N.D."/>
            <person name="Hall R."/>
            <person name="Halls K.S."/>
            <person name="Hammond S."/>
            <person name="Harley J.L."/>
            <person name="Hart E.A."/>
            <person name="Heath P.D."/>
            <person name="Heathcott R."/>
            <person name="Holmes S.J."/>
            <person name="Howden P.J."/>
            <person name="Howe K.L."/>
            <person name="Howell G.R."/>
            <person name="Huckle E."/>
            <person name="Humphray S.J."/>
            <person name="Humphries M.D."/>
            <person name="Hunt A.R."/>
            <person name="Johnson C.M."/>
            <person name="Joy A.A."/>
            <person name="Kay M."/>
            <person name="Keenan S.J."/>
            <person name="Kimberley A.M."/>
            <person name="King A."/>
            <person name="Laird G.K."/>
            <person name="Langford C."/>
            <person name="Lawlor S."/>
            <person name="Leongamornlert D.A."/>
            <person name="Leversha M."/>
            <person name="Lloyd C.R."/>
            <person name="Lloyd D.M."/>
            <person name="Loveland J.E."/>
            <person name="Lovell J."/>
            <person name="Martin S."/>
            <person name="Mashreghi-Mohammadi M."/>
            <person name="Maslen G.L."/>
            <person name="Matthews L."/>
            <person name="McCann O.T."/>
            <person name="McLaren S.J."/>
            <person name="McLay K."/>
            <person name="McMurray A."/>
            <person name="Moore M.J.F."/>
            <person name="Mullikin J.C."/>
            <person name="Niblett D."/>
            <person name="Nickerson T."/>
            <person name="Novik K.L."/>
            <person name="Oliver K."/>
            <person name="Overton-Larty E.K."/>
            <person name="Parker A."/>
            <person name="Patel R."/>
            <person name="Pearce A.V."/>
            <person name="Peck A.I."/>
            <person name="Phillimore B.J.C.T."/>
            <person name="Phillips S."/>
            <person name="Plumb R.W."/>
            <person name="Porter K.M."/>
            <person name="Ramsey Y."/>
            <person name="Ranby S.A."/>
            <person name="Rice C.M."/>
            <person name="Ross M.T."/>
            <person name="Searle S.M."/>
            <person name="Sehra H.K."/>
            <person name="Sheridan E."/>
            <person name="Skuce C.D."/>
            <person name="Smith S."/>
            <person name="Smith M."/>
            <person name="Spraggon L."/>
            <person name="Squares S.L."/>
            <person name="Steward C.A."/>
            <person name="Sycamore N."/>
            <person name="Tamlyn-Hall G."/>
            <person name="Tester J."/>
            <person name="Theaker A.J."/>
            <person name="Thomas D.W."/>
            <person name="Thorpe A."/>
            <person name="Tracey A."/>
            <person name="Tromans A."/>
            <person name="Tubby B."/>
            <person name="Wall M."/>
            <person name="Wallis J.M."/>
            <person name="West A.P."/>
            <person name="White S.S."/>
            <person name="Whitehead S.L."/>
            <person name="Whittaker H."/>
            <person name="Wild A."/>
            <person name="Willey D.J."/>
            <person name="Wilmer T.E."/>
            <person name="Wood J.M."/>
            <person name="Wray P.W."/>
            <person name="Wyatt J.C."/>
            <person name="Young L."/>
            <person name="Younger R.M."/>
            <person name="Bentley D.R."/>
            <person name="Coulson A."/>
            <person name="Durbin R.M."/>
            <person name="Hubbard T."/>
            <person name="Sulston J.E."/>
            <person name="Dunham I."/>
            <person name="Rogers J."/>
            <person name="Beck S."/>
        </authorList>
    </citation>
    <scope>NUCLEOTIDE SEQUENCE [LARGE SCALE GENOMIC DNA]</scope>
</reference>
<reference key="4">
    <citation type="journal article" date="2004" name="Genome Res.">
        <title>The status, quality, and expansion of the NIH full-length cDNA project: the Mammalian Gene Collection (MGC).</title>
        <authorList>
            <consortium name="The MGC Project Team"/>
        </authorList>
    </citation>
    <scope>NUCLEOTIDE SEQUENCE [LARGE SCALE MRNA]</scope>
    <source>
        <tissue>Bone marrow</tissue>
        <tissue>Prostate</tissue>
        <tissue>Skin</tissue>
    </source>
</reference>
<reference key="5">
    <citation type="journal article" date="2011" name="BMC Syst. Biol.">
        <title>Initial characterization of the human central proteome.</title>
        <authorList>
            <person name="Burkard T.R."/>
            <person name="Planyavsky M."/>
            <person name="Kaupe I."/>
            <person name="Breitwieser F.P."/>
            <person name="Buerckstuemmer T."/>
            <person name="Bennett K.L."/>
            <person name="Superti-Furga G."/>
            <person name="Colinge J."/>
        </authorList>
    </citation>
    <scope>IDENTIFICATION BY MASS SPECTROMETRY [LARGE SCALE ANALYSIS]</scope>
</reference>
<reference key="6">
    <citation type="journal article" date="2015" name="Proteomics">
        <title>N-terminome analysis of the human mitochondrial proteome.</title>
        <authorList>
            <person name="Vaca Jacome A.S."/>
            <person name="Rabilloud T."/>
            <person name="Schaeffer-Reiss C."/>
            <person name="Rompais M."/>
            <person name="Ayoub D."/>
            <person name="Lane L."/>
            <person name="Bairoch A."/>
            <person name="Van Dorsselaer A."/>
            <person name="Carapito C."/>
        </authorList>
    </citation>
    <scope>ACETYLATION [LARGE SCALE ANALYSIS] AT ALA-2</scope>
    <scope>CLEAVAGE OF INITIATOR METHIONINE [LARGE SCALE ANALYSIS]</scope>
    <scope>IDENTIFICATION BY MASS SPECTROMETRY [LARGE SCALE ANALYSIS]</scope>
</reference>
<sequence>MASSTVPVSAAGSANETPEIPDNVGDWLRGVYRFATDRNDFRRNLILNLGLFAAGVWLARNLSDIDLMAPQPGV</sequence>